<reference key="1">
    <citation type="journal article" date="1990" name="J. Biol. Chem.">
        <title>Cloning, sequencing, and expression of the genes encoding the adenosylcobalamin-dependent ethanolamine ammonia-lyase of Salmonella typhimurium.</title>
        <authorList>
            <person name="Faust L.R.P."/>
            <person name="Connor J.A."/>
            <person name="Roof D.M."/>
            <person name="Hoch J.A."/>
            <person name="Babior B.M."/>
        </authorList>
    </citation>
    <scope>NUCLEOTIDE SEQUENCE [GENOMIC DNA]</scope>
    <scope>FUNCTION</scope>
    <source>
        <strain>LT2</strain>
    </source>
</reference>
<reference key="2">
    <citation type="journal article" date="1999" name="J. Bacteriol.">
        <title>The 17-gene ethanolamine (eut) operon of Salmonella typhimurium encodes five homologues of carboxysome shell proteins.</title>
        <authorList>
            <person name="Kofoid E.C."/>
            <person name="Rappleye C.A."/>
            <person name="Stojiljkovic I."/>
            <person name="Roth J.R."/>
        </authorList>
    </citation>
    <scope>NUCLEOTIDE SEQUENCE [GENOMIC DNA]</scope>
    <scope>DISRUPTION PHENOTYPE</scope>
    <scope>SEQUENCE REVISION</scope>
    <source>
        <strain>LT2</strain>
    </source>
</reference>
<reference key="3">
    <citation type="journal article" date="2001" name="Nature">
        <title>Complete genome sequence of Salmonella enterica serovar Typhimurium LT2.</title>
        <authorList>
            <person name="McClelland M."/>
            <person name="Sanderson K.E."/>
            <person name="Spieth J."/>
            <person name="Clifton S.W."/>
            <person name="Latreille P."/>
            <person name="Courtney L."/>
            <person name="Porwollik S."/>
            <person name="Ali J."/>
            <person name="Dante M."/>
            <person name="Du F."/>
            <person name="Hou S."/>
            <person name="Layman D."/>
            <person name="Leonard S."/>
            <person name="Nguyen C."/>
            <person name="Scott K."/>
            <person name="Holmes A."/>
            <person name="Grewal N."/>
            <person name="Mulvaney E."/>
            <person name="Ryan E."/>
            <person name="Sun H."/>
            <person name="Florea L."/>
            <person name="Miller W."/>
            <person name="Stoneking T."/>
            <person name="Nhan M."/>
            <person name="Waterston R."/>
            <person name="Wilson R.K."/>
        </authorList>
    </citation>
    <scope>NUCLEOTIDE SEQUENCE [LARGE SCALE GENOMIC DNA]</scope>
    <source>
        <strain>LT2 / SGSC1412 / ATCC 700720</strain>
    </source>
</reference>
<reference key="4">
    <citation type="journal article" date="1988" name="J. Bacteriol.">
        <title>Ethanolamine utilization in Salmonella typhimurium.</title>
        <authorList>
            <person name="Roof D.M."/>
            <person name="Roth J.R."/>
        </authorList>
    </citation>
    <scope>FUNCTION</scope>
    <scope>PATHWAY</scope>
    <scope>OPERON</scope>
    <scope>INDUCTION BY ETHANOLAMINE AND COBALAMIN</scope>
    <source>
        <strain>LT2</strain>
    </source>
</reference>
<reference key="5">
    <citation type="journal article" date="1989" name="J. Bacteriol.">
        <title>Functions required for vitamin B12-dependent ethanolamine utilization in Salmonella typhimurium.</title>
        <authorList>
            <person name="Roof D.M."/>
            <person name="Roth J.R."/>
        </authorList>
    </citation>
    <scope>FUNCTION</scope>
    <scope>DISRUPTION PHENOTYPE</scope>
    <source>
        <strain>LT2</strain>
    </source>
</reference>
<reference key="6">
    <citation type="journal article" date="1992" name="Arch. Biochem. Biophys.">
        <title>Overexpression, purification, and some properties of the AdoCbl-dependent ethanolamine ammonia-lyase from Salmonella typhimurium.</title>
        <authorList>
            <person name="Faust L.P."/>
            <person name="Babior B.M."/>
        </authorList>
    </citation>
    <scope>FUNCTION</scope>
    <scope>CATALYTIC ACTIVITY</scope>
    <scope>COFACTOR</scope>
    <scope>BIOPHYSICOCHEMICAL PROPERTIES</scope>
    <scope>SUBUNIT</scope>
    <source>
        <strain>LT2</strain>
    </source>
</reference>
<reference key="7">
    <citation type="journal article" date="2006" name="J. Bacteriol.">
        <title>Conserving a volatile metabolite: a role for carboxysome-like organelles in Salmonella enterica.</title>
        <authorList>
            <person name="Penrod J.T."/>
            <person name="Roth J.R."/>
        </authorList>
    </citation>
    <scope>DISRUPTION PHENOTYPE</scope>
    <source>
        <strain>LT2</strain>
    </source>
</reference>
<reference key="8">
    <citation type="journal article" date="2015" name="PLoS Pathog.">
        <title>Ethanolamine Signaling Promotes Salmonella Niche Recognition and Adaptation during Infection.</title>
        <authorList>
            <person name="Anderson C.J."/>
            <person name="Clark D.E."/>
            <person name="Adli M."/>
            <person name="Kendall M.M."/>
        </authorList>
    </citation>
    <scope>DISRUPTION PHENOTYPE</scope>
    <source>
        <strain>SL1344</strain>
    </source>
</reference>
<reference key="9">
    <citation type="journal article" date="2015" name="PLoS Pathog.">
        <title>Correction: Ethanolamine Signaling Promotes Salmonella Niche Recognition and Adaptation during Infection.</title>
        <authorList>
            <person name="Anderson C.J."/>
            <person name="Clark D.E."/>
            <person name="Adli M."/>
            <person name="Kendall M.M."/>
        </authorList>
    </citation>
    <scope>ERRATUM OF PUBMED:26565973</scope>
</reference>
<reference key="10">
    <citation type="journal article" date="2013" name="J. Bacteriol.">
        <title>Evidence that a metabolic microcompartment contains and recycles private cofactor pools.</title>
        <authorList>
            <person name="Huseby D.L."/>
            <person name="Roth J.R."/>
        </authorList>
    </citation>
    <scope>FUNCTION</scope>
    <scope>DISRUPTION PHENOTYPE</scope>
    <source>
        <strain>LT2</strain>
    </source>
</reference>
<reference key="11">
    <citation type="journal article" date="2012" name="PLoS ONE">
        <title>Engineered protein nano-compartments for targeted enzyme localization.</title>
        <authorList>
            <person name="Choudhary S."/>
            <person name="Quin M.B."/>
            <person name="Sanders M.A."/>
            <person name="Johnson E.T."/>
            <person name="Schmidt-Dannert C."/>
        </authorList>
    </citation>
    <scope>SUBCELLULAR LOCATION</scope>
    <source>
        <strain>LT2</strain>
    </source>
</reference>
<reference key="12">
    <citation type="journal article" date="2018" name="Infect. Immun.">
        <title>The Ethanolamine Permease EutH Promotes Vacuole Adaptation of Salmonella enterica and Listeria monocytogenes during Macrophage Infection.</title>
        <authorList>
            <person name="Anderson C.J."/>
            <person name="Satkovich J."/>
            <person name="Koeseoglu V.K."/>
            <person name="Agaisse H."/>
            <person name="Kendall M.M."/>
        </authorList>
    </citation>
    <scope>FUNCTION</scope>
    <source>
        <strain>SL1344</strain>
    </source>
</reference>
<feature type="chain" id="PRO_0000087083" description="Ethanolamine ammonia-lyase large subunit">
    <location>
        <begin position="1"/>
        <end position="453"/>
    </location>
</feature>
<feature type="binding site" evidence="2">
    <location>
        <begin position="160"/>
        <end position="162"/>
    </location>
    <ligand>
        <name>substrate</name>
    </ligand>
</feature>
<feature type="binding site" evidence="2">
    <location>
        <position position="193"/>
    </location>
    <ligand>
        <name>substrate</name>
    </ligand>
</feature>
<feature type="binding site" evidence="2">
    <location>
        <position position="194"/>
    </location>
    <ligand>
        <name>adenosylcob(III)alamin</name>
        <dbReference type="ChEBI" id="CHEBI:18408"/>
    </ligand>
</feature>
<feature type="binding site" evidence="2">
    <location>
        <position position="246"/>
    </location>
    <ligand>
        <name>adenosylcob(III)alamin</name>
        <dbReference type="ChEBI" id="CHEBI:18408"/>
    </ligand>
</feature>
<feature type="binding site" evidence="2">
    <location>
        <position position="287"/>
    </location>
    <ligand>
        <name>substrate</name>
    </ligand>
</feature>
<feature type="binding site" evidence="2">
    <location>
        <position position="295"/>
    </location>
    <ligand>
        <name>adenosylcob(III)alamin</name>
        <dbReference type="ChEBI" id="CHEBI:18408"/>
    </ligand>
</feature>
<feature type="binding site" evidence="2">
    <location>
        <position position="362"/>
    </location>
    <ligand>
        <name>substrate</name>
    </ligand>
</feature>
<feature type="binding site" evidence="2">
    <location>
        <position position="401"/>
    </location>
    <ligand>
        <name>adenosylcob(III)alamin</name>
        <dbReference type="ChEBI" id="CHEBI:18408"/>
    </ligand>
</feature>
<feature type="sequence conflict" description="In Ref. 1; AAA27061." evidence="14" ref="1">
    <original>GVIDKFNIPTQGCVLAHVTTQIEAIRRG</original>
    <variation>ALSINSIFRPRAACWRTSPPRSKRFVA</variation>
    <location>
        <begin position="211"/>
        <end position="238"/>
    </location>
</feature>
<feature type="sequence conflict" description="In Ref. 1; AAA27061." evidence="14" ref="1">
    <original>GLIFQSICGS</original>
    <variation>RTDFPEHLRH</variation>
    <location>
        <begin position="242"/>
        <end position="251"/>
    </location>
</feature>
<name>EUTB_SALTY</name>
<organism>
    <name type="scientific">Salmonella typhimurium (strain LT2 / SGSC1412 / ATCC 700720)</name>
    <dbReference type="NCBI Taxonomy" id="99287"/>
    <lineage>
        <taxon>Bacteria</taxon>
        <taxon>Pseudomonadati</taxon>
        <taxon>Pseudomonadota</taxon>
        <taxon>Gammaproteobacteria</taxon>
        <taxon>Enterobacterales</taxon>
        <taxon>Enterobacteriaceae</taxon>
        <taxon>Salmonella</taxon>
    </lineage>
</organism>
<comment type="function">
    <text evidence="1 15 16 18">Catalyzes the deamination of various vicinal amino-alcohols to oxo compounds (Probable). It is spontaneously inactivated by its substrate and reactivated by EutA (By similarity). May play a role in BMC assembly or maintenance (Probable).</text>
</comment>
<comment type="function">
    <text evidence="9 10">Expression of the eut operon allows this bacteria to use ethanolamine (EA) as a carbon, nitrogen and energy source. It relies on cobalamin (vitamin B12) both as a cofactor for the ethanolamine ammonia-lyase activity and to induce the operon. EA enhances bacterial survival in macrophages in a concentration-dependent manner, suggesting it is an important nutrient during infection (PubMed:29531136).</text>
</comment>
<comment type="catalytic activity">
    <reaction evidence="2 4 19 20">
        <text>ethanolamine = acetaldehyde + NH4(+)</text>
        <dbReference type="Rhea" id="RHEA:15313"/>
        <dbReference type="ChEBI" id="CHEBI:15343"/>
        <dbReference type="ChEBI" id="CHEBI:28938"/>
        <dbReference type="ChEBI" id="CHEBI:57603"/>
        <dbReference type="EC" id="4.3.1.7"/>
    </reaction>
</comment>
<comment type="cofactor">
    <cofactor evidence="2 4">
        <name>adenosylcob(III)alamin</name>
        <dbReference type="ChEBI" id="CHEBI:18408"/>
    </cofactor>
    <text evidence="2">Binds between the large and small subunits.</text>
</comment>
<comment type="pathway">
    <text evidence="2 10">Amine and polyamine degradation; ethanolamine degradation.</text>
</comment>
<comment type="subunit">
    <text evidence="2 15">The basic unit is a heterodimer which dimerizes to form tetramers. The heterotetramers trimerize; 6 large subunits form a core ring with 6 small subunits projecting outwards.</text>
</comment>
<comment type="subcellular location">
    <subcellularLocation>
        <location evidence="2 17">Bacterial microcompartment</location>
    </subcellularLocation>
    <text evidence="6 17">Probably located in the BMC; as EutC is targeted to the BMC interior this subunit should be in the same location (Probable). Has been suggested to be on the exterior of the BMC (PubMed:23585538).</text>
</comment>
<comment type="induction">
    <text evidence="10">Part of the 17-gene eut operon transcribed from a single promoter, induced by ethanolamine and adenosylcobalamin (AdoCbl, vitamin B12).</text>
</comment>
<comment type="disruption phenotype">
    <text evidence="3 5 6 7 8">No aerobic growth on ethanolamine (EA) supplemented with cobalamin (vitamin B12) (PubMed:10464203, PubMed:2656649). No phenotype during growth in vitro. Decreased expression of eutR during bacterial growth in vitro. About 10-fold outcompeted by wild-type in mouse intestine at 2 and 4 days following oral infection, but no effect seen during growth in peritoneal exudate macrophages (PubMed:26565973). A non-polar deletion mutant does not grow on EA between pH 5.5 and pH 8.5, stops acetaldehyde release on EA plus vitamin B12 (PubMed:16585748). A deletion allows growth on acetate, suggesting BMC assembly or maintenance is impaired (PubMed:23585538).</text>
</comment>
<comment type="similarity">
    <text evidence="2">Belongs to the EutB family.</text>
</comment>
<protein>
    <recommendedName>
        <fullName evidence="2 12">Ethanolamine ammonia-lyase large subunit</fullName>
        <shortName evidence="2">EAL large subunit</shortName>
        <ecNumber evidence="2 4">4.3.1.7</ecNumber>
    </recommendedName>
    <alternativeName>
        <fullName evidence="11">Ethanolamine ammonia-lyase alpha subunit</fullName>
    </alternativeName>
    <alternativeName>
        <fullName>Ethanolamine ammonia-lyase heavy chain</fullName>
    </alternativeName>
</protein>
<gene>
    <name evidence="2 13" type="primary">eutB</name>
    <name type="ordered locus">STM2458</name>
</gene>
<accession>P19264</accession>
<accession>Q9ZFV1</accession>
<keyword id="KW-1283">Bacterial microcompartment</keyword>
<keyword id="KW-0846">Cobalamin</keyword>
<keyword id="KW-0170">Cobalt</keyword>
<keyword id="KW-0456">Lyase</keyword>
<keyword id="KW-1185">Reference proteome</keyword>
<keyword id="KW-0843">Virulence</keyword>
<proteinExistence type="evidence at protein level"/>
<evidence type="ECO:0000250" key="1">
    <source>
        <dbReference type="UniProtKB" id="P0AEJ6"/>
    </source>
</evidence>
<evidence type="ECO:0000255" key="2">
    <source>
        <dbReference type="HAMAP-Rule" id="MF_00861"/>
    </source>
</evidence>
<evidence type="ECO:0000269" key="3">
    <source>
    </source>
</evidence>
<evidence type="ECO:0000269" key="4">
    <source>
    </source>
</evidence>
<evidence type="ECO:0000269" key="5">
    <source>
    </source>
</evidence>
<evidence type="ECO:0000269" key="6">
    <source>
    </source>
</evidence>
<evidence type="ECO:0000269" key="7">
    <source>
    </source>
</evidence>
<evidence type="ECO:0000269" key="8">
    <source>
    </source>
</evidence>
<evidence type="ECO:0000269" key="9">
    <source>
    </source>
</evidence>
<evidence type="ECO:0000269" key="10">
    <source>
    </source>
</evidence>
<evidence type="ECO:0000303" key="11">
    <source>
    </source>
</evidence>
<evidence type="ECO:0000303" key="12">
    <source>
    </source>
</evidence>
<evidence type="ECO:0000303" key="13">
    <source>
    </source>
</evidence>
<evidence type="ECO:0000305" key="14"/>
<evidence type="ECO:0000305" key="15">
    <source>
    </source>
</evidence>
<evidence type="ECO:0000305" key="16">
    <source>
    </source>
</evidence>
<evidence type="ECO:0000305" key="17">
    <source>
    </source>
</evidence>
<evidence type="ECO:0000305" key="18">
    <source>
    </source>
</evidence>
<evidence type="ECO:0000305" key="19">
    <source>
    </source>
</evidence>
<evidence type="ECO:0000305" key="20">
    <source>
    </source>
</evidence>
<sequence length="453" mass="49449">MKLKTTLFGNVYQFKDVKEVLAKANELRSGDVLAGVAAASSQERVAAKQVLSEMTVADIRNNPVIAYEEDCVTRLIQDDVNETAYNRIKNWSISELREYVLSDETSVDDIAFTRKGLTSEVVAAVAKICSNADLIYGGKKMPVIKKANTTIGIPGTFSCRLQPNDTRDDVQSIAAQIYEGLSFGAGDAVIGVNPVTDDVENLTRVLDTVYGVIDKFNIPTQGCVLAHVTTQIEAIRRGAPGGLIFQSICGSEKGLKEFGVELAMLDEARAVGAEFNRIAGENCLYFETGQGSALSAGANFGADQVTMEARNYGLARHYDPFLVNTVVGFIGPEYLYNDRQIIRAGLEDHFMGKLSGISMGCDCCYTNHADADQNLNENLMILLATAGCNYIMGMPLGDDIMLNYQTTAFHDTATVRQLLNLRPSPEFERWLETMGIMANGRLTKRAGDPSLFF</sequence>
<dbReference type="EC" id="4.3.1.7" evidence="2 4"/>
<dbReference type="EMBL" id="J05518">
    <property type="protein sequence ID" value="AAA27061.1"/>
    <property type="molecule type" value="Genomic_DNA"/>
</dbReference>
<dbReference type="EMBL" id="AF093749">
    <property type="protein sequence ID" value="AAC78123.1"/>
    <property type="molecule type" value="Genomic_DNA"/>
</dbReference>
<dbReference type="EMBL" id="AE006468">
    <property type="protein sequence ID" value="AAL21352.1"/>
    <property type="molecule type" value="Genomic_DNA"/>
</dbReference>
<dbReference type="PIR" id="A36570">
    <property type="entry name" value="A36570"/>
</dbReference>
<dbReference type="RefSeq" id="NP_461393.1">
    <property type="nucleotide sequence ID" value="NC_003197.2"/>
</dbReference>
<dbReference type="RefSeq" id="WP_000769990.1">
    <property type="nucleotide sequence ID" value="NC_003197.2"/>
</dbReference>
<dbReference type="SMR" id="P19264"/>
<dbReference type="STRING" id="99287.STM2458"/>
<dbReference type="PaxDb" id="99287-STM2458"/>
<dbReference type="GeneID" id="1253980"/>
<dbReference type="KEGG" id="stm:STM2458"/>
<dbReference type="PATRIC" id="fig|99287.12.peg.2596"/>
<dbReference type="HOGENOM" id="CLU_048555_0_0_6"/>
<dbReference type="OMA" id="PMADDCM"/>
<dbReference type="PhylomeDB" id="P19264"/>
<dbReference type="BioCyc" id="SENT99287:STM2458-MONOMER"/>
<dbReference type="BRENDA" id="4.3.1.7">
    <property type="organism ID" value="5542"/>
</dbReference>
<dbReference type="UniPathway" id="UPA00560"/>
<dbReference type="Proteomes" id="UP000001014">
    <property type="component" value="Chromosome"/>
</dbReference>
<dbReference type="GO" id="GO:0005829">
    <property type="term" value="C:cytosol"/>
    <property type="evidence" value="ECO:0000318"/>
    <property type="project" value="GO_Central"/>
</dbReference>
<dbReference type="GO" id="GO:0009350">
    <property type="term" value="C:ethanolamine ammonia-lyase complex"/>
    <property type="evidence" value="ECO:0000314"/>
    <property type="project" value="UniProtKB"/>
</dbReference>
<dbReference type="GO" id="GO:0031471">
    <property type="term" value="C:ethanolamine degradation polyhedral organelle"/>
    <property type="evidence" value="ECO:0000353"/>
    <property type="project" value="UniProtKB"/>
</dbReference>
<dbReference type="GO" id="GO:0031419">
    <property type="term" value="F:cobalamin binding"/>
    <property type="evidence" value="ECO:0007669"/>
    <property type="project" value="UniProtKB-UniRule"/>
</dbReference>
<dbReference type="GO" id="GO:0008851">
    <property type="term" value="F:ethanolamine ammonia-lyase activity"/>
    <property type="evidence" value="ECO:0007669"/>
    <property type="project" value="UniProtKB-UniRule"/>
</dbReference>
<dbReference type="GO" id="GO:0006520">
    <property type="term" value="P:amino acid metabolic process"/>
    <property type="evidence" value="ECO:0007669"/>
    <property type="project" value="InterPro"/>
</dbReference>
<dbReference type="GO" id="GO:0046336">
    <property type="term" value="P:ethanolamine catabolic process"/>
    <property type="evidence" value="ECO:0000318"/>
    <property type="project" value="GO_Central"/>
</dbReference>
<dbReference type="FunFam" id="1.10.220.70:FF:000001">
    <property type="entry name" value="Ethanolamine ammonia-lyase heavy chain"/>
    <property type="match status" value="1"/>
</dbReference>
<dbReference type="FunFam" id="2.30.170.30:FF:000001">
    <property type="entry name" value="Ethanolamine ammonia-lyase heavy chain"/>
    <property type="match status" value="1"/>
</dbReference>
<dbReference type="FunFam" id="3.20.20.70:FF:000055">
    <property type="entry name" value="Ethanolamine ammonia-lyase heavy chain"/>
    <property type="match status" value="1"/>
</dbReference>
<dbReference type="Gene3D" id="3.20.20.70">
    <property type="entry name" value="Aldolase class I"/>
    <property type="match status" value="1"/>
</dbReference>
<dbReference type="Gene3D" id="2.30.170.30">
    <property type="entry name" value="ethanolamine ammonia-lyase heavy chain domain like"/>
    <property type="match status" value="1"/>
</dbReference>
<dbReference type="Gene3D" id="1.10.220.70">
    <property type="entry name" value="lyase"/>
    <property type="match status" value="1"/>
</dbReference>
<dbReference type="HAMAP" id="MF_00861">
    <property type="entry name" value="EutB"/>
    <property type="match status" value="1"/>
</dbReference>
<dbReference type="InterPro" id="IPR013785">
    <property type="entry name" value="Aldolase_TIM"/>
</dbReference>
<dbReference type="InterPro" id="IPR010628">
    <property type="entry name" value="EutB"/>
</dbReference>
<dbReference type="InterPro" id="IPR044939">
    <property type="entry name" value="EutB_dom_2_sf"/>
</dbReference>
<dbReference type="InterPro" id="IPR044941">
    <property type="entry name" value="EutB_N_sf"/>
</dbReference>
<dbReference type="NCBIfam" id="NF011649">
    <property type="entry name" value="PRK15067.1"/>
    <property type="match status" value="1"/>
</dbReference>
<dbReference type="PANTHER" id="PTHR39329">
    <property type="entry name" value="ETHANOLAMINE AMMONIA-LYASE HEAVY CHAIN"/>
    <property type="match status" value="1"/>
</dbReference>
<dbReference type="PANTHER" id="PTHR39329:SF1">
    <property type="entry name" value="ETHANOLAMINE AMMONIA-LYASE LARGE SUBUNIT"/>
    <property type="match status" value="1"/>
</dbReference>
<dbReference type="Pfam" id="PF06751">
    <property type="entry name" value="EutB"/>
    <property type="match status" value="1"/>
</dbReference>
<dbReference type="PIRSF" id="PIRSF018788">
    <property type="entry name" value="EutB"/>
    <property type="match status" value="1"/>
</dbReference>